<name>LRX2_ARATH</name>
<accession>O48809</accession>
<accession>F4HYS8</accession>
<reference key="1">
    <citation type="journal article" date="2000" name="Nature">
        <title>Sequence and analysis of chromosome 1 of the plant Arabidopsis thaliana.</title>
        <authorList>
            <person name="Theologis A."/>
            <person name="Ecker J.R."/>
            <person name="Palm C.J."/>
            <person name="Federspiel N.A."/>
            <person name="Kaul S."/>
            <person name="White O."/>
            <person name="Alonso J."/>
            <person name="Altafi H."/>
            <person name="Araujo R."/>
            <person name="Bowman C.L."/>
            <person name="Brooks S.Y."/>
            <person name="Buehler E."/>
            <person name="Chan A."/>
            <person name="Chao Q."/>
            <person name="Chen H."/>
            <person name="Cheuk R.F."/>
            <person name="Chin C.W."/>
            <person name="Chung M.K."/>
            <person name="Conn L."/>
            <person name="Conway A.B."/>
            <person name="Conway A.R."/>
            <person name="Creasy T.H."/>
            <person name="Dewar K."/>
            <person name="Dunn P."/>
            <person name="Etgu P."/>
            <person name="Feldblyum T.V."/>
            <person name="Feng J.-D."/>
            <person name="Fong B."/>
            <person name="Fujii C.Y."/>
            <person name="Gill J.E."/>
            <person name="Goldsmith A.D."/>
            <person name="Haas B."/>
            <person name="Hansen N.F."/>
            <person name="Hughes B."/>
            <person name="Huizar L."/>
            <person name="Hunter J.L."/>
            <person name="Jenkins J."/>
            <person name="Johnson-Hopson C."/>
            <person name="Khan S."/>
            <person name="Khaykin E."/>
            <person name="Kim C.J."/>
            <person name="Koo H.L."/>
            <person name="Kremenetskaia I."/>
            <person name="Kurtz D.B."/>
            <person name="Kwan A."/>
            <person name="Lam B."/>
            <person name="Langin-Hooper S."/>
            <person name="Lee A."/>
            <person name="Lee J.M."/>
            <person name="Lenz C.A."/>
            <person name="Li J.H."/>
            <person name="Li Y.-P."/>
            <person name="Lin X."/>
            <person name="Liu S.X."/>
            <person name="Liu Z.A."/>
            <person name="Luros J.S."/>
            <person name="Maiti R."/>
            <person name="Marziali A."/>
            <person name="Militscher J."/>
            <person name="Miranda M."/>
            <person name="Nguyen M."/>
            <person name="Nierman W.C."/>
            <person name="Osborne B.I."/>
            <person name="Pai G."/>
            <person name="Peterson J."/>
            <person name="Pham P.K."/>
            <person name="Rizzo M."/>
            <person name="Rooney T."/>
            <person name="Rowley D."/>
            <person name="Sakano H."/>
            <person name="Salzberg S.L."/>
            <person name="Schwartz J.R."/>
            <person name="Shinn P."/>
            <person name="Southwick A.M."/>
            <person name="Sun H."/>
            <person name="Tallon L.J."/>
            <person name="Tambunga G."/>
            <person name="Toriumi M.J."/>
            <person name="Town C.D."/>
            <person name="Utterback T."/>
            <person name="Van Aken S."/>
            <person name="Vaysberg M."/>
            <person name="Vysotskaia V.S."/>
            <person name="Walker M."/>
            <person name="Wu D."/>
            <person name="Yu G."/>
            <person name="Fraser C.M."/>
            <person name="Venter J.C."/>
            <person name="Davis R.W."/>
        </authorList>
    </citation>
    <scope>NUCLEOTIDE SEQUENCE [LARGE SCALE GENOMIC DNA]</scope>
    <source>
        <strain>cv. Columbia</strain>
    </source>
</reference>
<reference key="2">
    <citation type="journal article" date="2017" name="Plant J.">
        <title>Araport11: a complete reannotation of the Arabidopsis thaliana reference genome.</title>
        <authorList>
            <person name="Cheng C.Y."/>
            <person name="Krishnakumar V."/>
            <person name="Chan A.P."/>
            <person name="Thibaud-Nissen F."/>
            <person name="Schobel S."/>
            <person name="Town C.D."/>
        </authorList>
    </citation>
    <scope>GENOME REANNOTATION</scope>
    <source>
        <strain>cv. Columbia</strain>
    </source>
</reference>
<reference key="3">
    <citation type="journal article" date="2003" name="Plant J.">
        <title>Synergistic interaction of the two paralogous Arabidopsis genes LRX1 and LRX2 in cell wall formation during root hair development.</title>
        <authorList>
            <person name="Baumberger N."/>
            <person name="Steiner M."/>
            <person name="Ryser U."/>
            <person name="Keller B."/>
            <person name="Ringli C."/>
        </authorList>
    </citation>
    <scope>FUNCTION</scope>
    <scope>TISSUE SPECIFICITY</scope>
    <scope>INDUCTION BY ETHYLENE</scope>
    <scope>DISRUPTION PHENOTYPE</scope>
</reference>
<reference key="4">
    <citation type="journal article" date="2003" name="Plant Physiol.">
        <title>Whole-genome comparison of leucine-rich repeat extensins in Arabidopsis and rice. A conserved family of cell wall proteins form a vegetative and a reproductive clade.</title>
        <authorList>
            <person name="Baumberger N."/>
            <person name="Doesseger B."/>
            <person name="Guyot R."/>
            <person name="Diet A."/>
            <person name="Parsons R.L."/>
            <person name="Clark M.A."/>
            <person name="Simmons M.P."/>
            <person name="Bedinger P."/>
            <person name="Goff S.A."/>
            <person name="Ringli C."/>
            <person name="Keller B."/>
        </authorList>
    </citation>
    <scope>GENE FAMILY</scope>
    <scope>NOMENCLATURE</scope>
</reference>
<evidence type="ECO:0000250" key="1"/>
<evidence type="ECO:0000255" key="2"/>
<evidence type="ECO:0000256" key="3">
    <source>
        <dbReference type="SAM" id="MobiDB-lite"/>
    </source>
</evidence>
<evidence type="ECO:0000269" key="4">
    <source>
    </source>
</evidence>
<evidence type="ECO:0000305" key="5">
    <source>
    </source>
</evidence>
<evidence type="ECO:0007829" key="6">
    <source>
        <dbReference type="PDB" id="6QXP"/>
    </source>
</evidence>
<dbReference type="EMBL" id="AC003113">
    <property type="protein sequence ID" value="AAF70841.1"/>
    <property type="molecule type" value="Genomic_DNA"/>
</dbReference>
<dbReference type="EMBL" id="AC005698">
    <property type="protein sequence ID" value="AAD43602.1"/>
    <property type="molecule type" value="Genomic_DNA"/>
</dbReference>
<dbReference type="EMBL" id="CP002684">
    <property type="protein sequence ID" value="AEE33968.2"/>
    <property type="molecule type" value="Genomic_DNA"/>
</dbReference>
<dbReference type="PIR" id="T01456">
    <property type="entry name" value="T01456"/>
</dbReference>
<dbReference type="RefSeq" id="NP_176434.2">
    <property type="nucleotide sequence ID" value="NM_104924.2"/>
</dbReference>
<dbReference type="PDB" id="6QXP">
    <property type="method" value="X-ray"/>
    <property type="resolution" value="3.20 A"/>
    <property type="chains" value="A/B/C/D/E/F/G/H=29-385"/>
</dbReference>
<dbReference type="PDBsum" id="6QXP"/>
<dbReference type="SMR" id="O48809"/>
<dbReference type="FunCoup" id="O48809">
    <property type="interactions" value="120"/>
</dbReference>
<dbReference type="STRING" id="3702.O48809"/>
<dbReference type="GlyCosmos" id="O48809">
    <property type="glycosylation" value="6 sites, No reported glycans"/>
</dbReference>
<dbReference type="GlyGen" id="O48809">
    <property type="glycosylation" value="7 sites"/>
</dbReference>
<dbReference type="PaxDb" id="3702-AT1G62440.1"/>
<dbReference type="ProteomicsDB" id="238738"/>
<dbReference type="EnsemblPlants" id="AT1G62440.1">
    <property type="protein sequence ID" value="AT1G62440.1"/>
    <property type="gene ID" value="AT1G62440"/>
</dbReference>
<dbReference type="GeneID" id="842542"/>
<dbReference type="Gramene" id="AT1G62440.1">
    <property type="protein sequence ID" value="AT1G62440.1"/>
    <property type="gene ID" value="AT1G62440"/>
</dbReference>
<dbReference type="KEGG" id="ath:AT1G62440"/>
<dbReference type="Araport" id="AT1G62440"/>
<dbReference type="TAIR" id="AT1G62440">
    <property type="gene designation" value="LRX2"/>
</dbReference>
<dbReference type="eggNOG" id="ENOG502QQD2">
    <property type="taxonomic scope" value="Eukaryota"/>
</dbReference>
<dbReference type="HOGENOM" id="CLU_000288_23_4_1"/>
<dbReference type="InParanoid" id="O48809"/>
<dbReference type="OMA" id="YYTPVTQ"/>
<dbReference type="PRO" id="PR:O48809"/>
<dbReference type="Proteomes" id="UP000006548">
    <property type="component" value="Chromosome 1"/>
</dbReference>
<dbReference type="ExpressionAtlas" id="O48809">
    <property type="expression patterns" value="baseline and differential"/>
</dbReference>
<dbReference type="GO" id="GO:0005576">
    <property type="term" value="C:extracellular region"/>
    <property type="evidence" value="ECO:0007669"/>
    <property type="project" value="UniProtKB-KW"/>
</dbReference>
<dbReference type="GO" id="GO:0071555">
    <property type="term" value="P:cell wall organization"/>
    <property type="evidence" value="ECO:0007669"/>
    <property type="project" value="UniProtKB-KW"/>
</dbReference>
<dbReference type="FunFam" id="3.80.10.10:FF:000224">
    <property type="entry name" value="Leucine-rich repeat extensin-like protein 1"/>
    <property type="match status" value="1"/>
</dbReference>
<dbReference type="FunFam" id="3.80.10.10:FF:000383">
    <property type="entry name" value="Leucine-rich repeat receptor protein kinase EMS1"/>
    <property type="match status" value="1"/>
</dbReference>
<dbReference type="Gene3D" id="3.80.10.10">
    <property type="entry name" value="Ribonuclease Inhibitor"/>
    <property type="match status" value="2"/>
</dbReference>
<dbReference type="InterPro" id="IPR001611">
    <property type="entry name" value="Leu-rich_rpt"/>
</dbReference>
<dbReference type="InterPro" id="IPR032675">
    <property type="entry name" value="LRR_dom_sf"/>
</dbReference>
<dbReference type="InterPro" id="IPR051582">
    <property type="entry name" value="LRR_extensin-like_regulator"/>
</dbReference>
<dbReference type="InterPro" id="IPR013210">
    <property type="entry name" value="LRR_N_plant-typ"/>
</dbReference>
<dbReference type="PANTHER" id="PTHR32093:SF115">
    <property type="entry name" value="LEUCINE-RICH REPEAT EXTENSIN-LIKE PROTEIN 2"/>
    <property type="match status" value="1"/>
</dbReference>
<dbReference type="PANTHER" id="PTHR32093">
    <property type="entry name" value="LEUCINE-RICH REPEAT EXTENSIN-LIKE PROTEIN 3-RELATED"/>
    <property type="match status" value="1"/>
</dbReference>
<dbReference type="Pfam" id="PF00560">
    <property type="entry name" value="LRR_1"/>
    <property type="match status" value="2"/>
</dbReference>
<dbReference type="Pfam" id="PF13855">
    <property type="entry name" value="LRR_8"/>
    <property type="match status" value="1"/>
</dbReference>
<dbReference type="Pfam" id="PF08263">
    <property type="entry name" value="LRRNT_2"/>
    <property type="match status" value="1"/>
</dbReference>
<dbReference type="PRINTS" id="PR01217">
    <property type="entry name" value="PRICHEXTENSN"/>
</dbReference>
<dbReference type="SUPFAM" id="SSF52058">
    <property type="entry name" value="L domain-like"/>
    <property type="match status" value="1"/>
</dbReference>
<organism>
    <name type="scientific">Arabidopsis thaliana</name>
    <name type="common">Mouse-ear cress</name>
    <dbReference type="NCBI Taxonomy" id="3702"/>
    <lineage>
        <taxon>Eukaryota</taxon>
        <taxon>Viridiplantae</taxon>
        <taxon>Streptophyta</taxon>
        <taxon>Embryophyta</taxon>
        <taxon>Tracheophyta</taxon>
        <taxon>Spermatophyta</taxon>
        <taxon>Magnoliopsida</taxon>
        <taxon>eudicotyledons</taxon>
        <taxon>Gunneridae</taxon>
        <taxon>Pentapetalae</taxon>
        <taxon>rosids</taxon>
        <taxon>malvids</taxon>
        <taxon>Brassicales</taxon>
        <taxon>Brassicaceae</taxon>
        <taxon>Camelineae</taxon>
        <taxon>Arabidopsis</taxon>
    </lineage>
</organism>
<proteinExistence type="evidence at protein level"/>
<protein>
    <recommendedName>
        <fullName>Leucine-rich repeat extensin-like protein 2</fullName>
        <shortName>AtLRX2</shortName>
        <shortName>LRR/EXTENSIN2</shortName>
    </recommendedName>
    <alternativeName>
        <fullName>Cell wall hydroxyproline-rich glycoprotein</fullName>
    </alternativeName>
</protein>
<keyword id="KW-0002">3D-structure</keyword>
<keyword id="KW-0134">Cell wall</keyword>
<keyword id="KW-0961">Cell wall biogenesis/degradation</keyword>
<keyword id="KW-0217">Developmental protein</keyword>
<keyword id="KW-0325">Glycoprotein</keyword>
<keyword id="KW-0379">Hydroxylation</keyword>
<keyword id="KW-0433">Leucine-rich repeat</keyword>
<keyword id="KW-1185">Reference proteome</keyword>
<keyword id="KW-0677">Repeat</keyword>
<keyword id="KW-0964">Secreted</keyword>
<keyword id="KW-0732">Signal</keyword>
<sequence>MLLFPSTSLRLFFFLFLLFSSCFLQIRGDDDDDDISDDNIKVDPSLKFENPSLRQAYIALQSWKQAIFSDPFNFTANWNGSDVCSYNGIFCAPSPSSPKTRVVAGIDLNHADMAGYLPRELGLLTDLALFHLNSNRFCGEVPLTFKHMKLLFELDLSNNRFVGKFPNVVLSLPSLKFLDLRYNEFEGSIPSKLFDKELDAIFLNHNRFMFGIPENMGNSPVSALVLADNDLGGCIPGSIGLMGKTLNEIILSNDNLTGCLPPQIGNLKNVTVFDISFNRLSGPLPSSIGNMKSLEQLNVANNRFTGVIPSSICQLSNLENFTYSSNFFTGDAPRCVALLGDNVVVNGSMNCIDGKEDQRSSKECSSPASRSVDCSKFGCNNFFSPPPPSFKMSPTVRVLPPPPPSSKMSPTFRATPPPPSSKMSPSFRATPPPPSSKMSPSFRATPPPPSSKMSPSVKAYPPPPPPPEYEPSPPPPSSEMSPSVRAYPPPPPLSPPPPSPPPPYIYSSPPPPSPSPPPPYIYSSPPPVVNCPPTTQSPPPPKYEQTPSPREYYPSPSPPYYQYTSSPPPPTYYATQSPPPPPPPTYYAVQSPPPPPPVYYPPVTASPPPPPVYYTPVIQSPPPPPVYYSPVTQSPPPPPPVYYPPVTQSPPPSPVYYPPVTQSPPPPPVYYLPVTQSPPPPSPVYYPPVAKSPPPPSPVYYPPVTQSPPPPSTPVEYHPPASPNQSPPPEYQSPPPKGCNDSPSNDHHYQTPTPPSLPPPYYEDTPLPPIRGVSYASPPPPSIPYY</sequence>
<feature type="signal peptide" evidence="2">
    <location>
        <begin position="1"/>
        <end position="28"/>
    </location>
</feature>
<feature type="chain" id="PRO_0000395462" description="Leucine-rich repeat extensin-like protein 2">
    <location>
        <begin position="29"/>
        <end position="786"/>
    </location>
</feature>
<feature type="repeat" description="LRR 1">
    <location>
        <begin position="100"/>
        <end position="124"/>
    </location>
</feature>
<feature type="repeat" description="LRR 2">
    <location>
        <begin position="125"/>
        <end position="147"/>
    </location>
</feature>
<feature type="repeat" description="LRR 3">
    <location>
        <begin position="149"/>
        <end position="172"/>
    </location>
</feature>
<feature type="repeat" description="LRR 4">
    <location>
        <begin position="173"/>
        <end position="196"/>
    </location>
</feature>
<feature type="repeat" description="LRR 5">
    <location>
        <begin position="198"/>
        <end position="219"/>
    </location>
</feature>
<feature type="repeat" description="LRR 6">
    <location>
        <begin position="221"/>
        <end position="243"/>
    </location>
</feature>
<feature type="repeat" description="LRR 7">
    <location>
        <begin position="244"/>
        <end position="267"/>
    </location>
</feature>
<feature type="repeat" description="LRR 8">
    <location>
        <begin position="268"/>
        <end position="291"/>
    </location>
</feature>
<feature type="repeat" description="LRR 9">
    <location>
        <begin position="292"/>
        <end position="315"/>
    </location>
</feature>
<feature type="region of interest" description="Disordered" evidence="3">
    <location>
        <begin position="352"/>
        <end position="372"/>
    </location>
</feature>
<feature type="region of interest" description="Contains the Ser-Pro(4) repeats">
    <location>
        <begin position="384"/>
        <end position="786"/>
    </location>
</feature>
<feature type="region of interest" description="Disordered" evidence="3">
    <location>
        <begin position="390"/>
        <end position="589"/>
    </location>
</feature>
<feature type="region of interest" description="Disordered" evidence="3">
    <location>
        <begin position="624"/>
        <end position="645"/>
    </location>
</feature>
<feature type="region of interest" description="Disordered" evidence="3">
    <location>
        <begin position="694"/>
        <end position="786"/>
    </location>
</feature>
<feature type="compositionally biased region" description="Basic and acidic residues" evidence="3">
    <location>
        <begin position="353"/>
        <end position="362"/>
    </location>
</feature>
<feature type="compositionally biased region" description="Pro residues" evidence="3">
    <location>
        <begin position="460"/>
        <end position="477"/>
    </location>
</feature>
<feature type="compositionally biased region" description="Pro residues" evidence="3">
    <location>
        <begin position="487"/>
        <end position="542"/>
    </location>
</feature>
<feature type="compositionally biased region" description="Pro residues" evidence="3">
    <location>
        <begin position="566"/>
        <end position="589"/>
    </location>
</feature>
<feature type="compositionally biased region" description="Pro residues" evidence="3">
    <location>
        <begin position="694"/>
        <end position="713"/>
    </location>
</feature>
<feature type="compositionally biased region" description="Pro residues" evidence="3">
    <location>
        <begin position="720"/>
        <end position="737"/>
    </location>
</feature>
<feature type="compositionally biased region" description="Pro residues" evidence="3">
    <location>
        <begin position="752"/>
        <end position="769"/>
    </location>
</feature>
<feature type="compositionally biased region" description="Pro residues" evidence="3">
    <location>
        <begin position="777"/>
        <end position="786"/>
    </location>
</feature>
<feature type="glycosylation site" description="N-linked (GlcNAc...) asparagine" evidence="2">
    <location>
        <position position="73"/>
    </location>
</feature>
<feature type="glycosylation site" description="N-linked (GlcNAc...) asparagine" evidence="2">
    <location>
        <position position="79"/>
    </location>
</feature>
<feature type="glycosylation site" description="N-linked (GlcNAc...) asparagine" evidence="2">
    <location>
        <position position="255"/>
    </location>
</feature>
<feature type="glycosylation site" description="N-linked (GlcNAc...) asparagine" evidence="2">
    <location>
        <position position="269"/>
    </location>
</feature>
<feature type="glycosylation site" description="N-linked (GlcNAc...) asparagine" evidence="2">
    <location>
        <position position="320"/>
    </location>
</feature>
<feature type="glycosylation site" description="N-linked (GlcNAc...) asparagine" evidence="2">
    <location>
        <position position="346"/>
    </location>
</feature>
<feature type="helix" evidence="6">
    <location>
        <begin position="51"/>
        <end position="66"/>
    </location>
</feature>
<feature type="strand" evidence="6">
    <location>
        <begin position="67"/>
        <end position="69"/>
    </location>
</feature>
<feature type="helix" evidence="6">
    <location>
        <begin position="75"/>
        <end position="77"/>
    </location>
</feature>
<feature type="helix" evidence="6">
    <location>
        <begin position="83"/>
        <end position="85"/>
    </location>
</feature>
<feature type="strand" evidence="6">
    <location>
        <begin position="89"/>
        <end position="93"/>
    </location>
</feature>
<feature type="strand" evidence="6">
    <location>
        <begin position="100"/>
        <end position="107"/>
    </location>
</feature>
<feature type="strand" evidence="6">
    <location>
        <begin position="114"/>
        <end position="116"/>
    </location>
</feature>
<feature type="helix" evidence="6">
    <location>
        <begin position="119"/>
        <end position="123"/>
    </location>
</feature>
<feature type="strand" evidence="6">
    <location>
        <begin position="129"/>
        <end position="131"/>
    </location>
</feature>
<feature type="strand" evidence="6">
    <location>
        <begin position="136"/>
        <end position="139"/>
    </location>
</feature>
<feature type="helix" evidence="6">
    <location>
        <begin position="143"/>
        <end position="147"/>
    </location>
</feature>
<feature type="strand" evidence="6">
    <location>
        <begin position="153"/>
        <end position="155"/>
    </location>
</feature>
<feature type="strand" evidence="6">
    <location>
        <begin position="158"/>
        <end position="164"/>
    </location>
</feature>
<feature type="helix" evidence="6">
    <location>
        <begin position="168"/>
        <end position="171"/>
    </location>
</feature>
<feature type="strand" evidence="6">
    <location>
        <begin position="177"/>
        <end position="179"/>
    </location>
</feature>
<feature type="strand" evidence="6">
    <location>
        <begin position="182"/>
        <end position="188"/>
    </location>
</feature>
<feature type="helix" evidence="6">
    <location>
        <begin position="191"/>
        <end position="195"/>
    </location>
</feature>
<feature type="strand" evidence="6">
    <location>
        <begin position="199"/>
        <end position="202"/>
    </location>
</feature>
<feature type="strand" evidence="6">
    <location>
        <begin position="205"/>
        <end position="207"/>
    </location>
</feature>
<feature type="helix" evidence="6">
    <location>
        <begin position="216"/>
        <end position="218"/>
    </location>
</feature>
<feature type="strand" evidence="6">
    <location>
        <begin position="222"/>
        <end position="225"/>
    </location>
</feature>
<feature type="strand" evidence="6">
    <location>
        <begin position="228"/>
        <end position="233"/>
    </location>
</feature>
<feature type="helix" evidence="6">
    <location>
        <begin position="237"/>
        <end position="243"/>
    </location>
</feature>
<feature type="strand" evidence="6">
    <location>
        <begin position="248"/>
        <end position="250"/>
    </location>
</feature>
<feature type="strand" evidence="6">
    <location>
        <begin position="254"/>
        <end position="258"/>
    </location>
</feature>
<feature type="helix" evidence="6">
    <location>
        <begin position="262"/>
        <end position="266"/>
    </location>
</feature>
<feature type="strand" evidence="6">
    <location>
        <begin position="272"/>
        <end position="274"/>
    </location>
</feature>
<feature type="strand" evidence="6">
    <location>
        <begin position="277"/>
        <end position="282"/>
    </location>
</feature>
<feature type="helix" evidence="6">
    <location>
        <begin position="286"/>
        <end position="290"/>
    </location>
</feature>
<feature type="strand" evidence="6">
    <location>
        <begin position="296"/>
        <end position="298"/>
    </location>
</feature>
<feature type="strand" evidence="6">
    <location>
        <begin position="301"/>
        <end position="304"/>
    </location>
</feature>
<feature type="helix" evidence="6">
    <location>
        <begin position="310"/>
        <end position="314"/>
    </location>
</feature>
<feature type="strand" evidence="6">
    <location>
        <begin position="320"/>
        <end position="322"/>
    </location>
</feature>
<feature type="strand" evidence="6">
    <location>
        <begin position="344"/>
        <end position="346"/>
    </location>
</feature>
<feature type="strand" evidence="6">
    <location>
        <begin position="353"/>
        <end position="357"/>
    </location>
</feature>
<feature type="turn" evidence="6">
    <location>
        <begin position="361"/>
        <end position="363"/>
    </location>
</feature>
<feature type="strand" evidence="6">
    <location>
        <begin position="364"/>
        <end position="366"/>
    </location>
</feature>
<feature type="turn" evidence="6">
    <location>
        <begin position="367"/>
        <end position="369"/>
    </location>
</feature>
<feature type="strand" evidence="6">
    <location>
        <begin position="374"/>
        <end position="379"/>
    </location>
</feature>
<comment type="function">
    <text evidence="4">Modulates cell morphogenesis by regulating cell wall formation and assembly, and/or growth polarization. Together with LRX2, component of the extracellular mechanism regulating root hair morphogenesis and elongation.</text>
</comment>
<comment type="subcellular location">
    <subcellularLocation>
        <location evidence="5">Secreted</location>
        <location evidence="5">Cell wall</location>
    </subcellularLocation>
</comment>
<comment type="tissue specificity">
    <text evidence="4">Mostly expressed in roots, also present in stems at low levels. In roots, confined to differentiation zones, the collet, and meristematic cells of tips.</text>
</comment>
<comment type="induction">
    <text evidence="4">By ethylene.</text>
</comment>
<comment type="PTM">
    <text evidence="1">Hydroxylated on proline residues in the S-P-P-P-P repeat.</text>
</comment>
<comment type="PTM">
    <text evidence="1">O-glycosylated on hydroxyprolines.</text>
</comment>
<comment type="disruption phenotype">
    <text evidence="4">No visible effect. Enhances LRX1 disruption phenotype when associated with LRX1 disruption; frequent rupture of root hairs soon after their initiation.</text>
</comment>
<gene>
    <name type="primary">LRX2</name>
    <name type="ordered locus">At1g62440</name>
    <name type="ORF">F24O1.18</name>
    <name type="ORF">T3P18.1</name>
</gene>